<accession>Q8RCD5</accession>
<evidence type="ECO:0000255" key="1">
    <source>
        <dbReference type="HAMAP-Rule" id="MF_01185"/>
    </source>
</evidence>
<gene>
    <name evidence="1" type="primary">fliW</name>
    <name type="ordered locus">TTE0497</name>
</gene>
<sequence>MELNTKNFGIIHYNEEDVIYFEEGIPGFEELHNFLIIGDEEEDMPFKWLQSIDNPDIAFVVIDPRVFKPDYTFEIDEELKNFLAVEDVNHLLIFVIVVIPEKIEEMTANLKAPIIINAENNRGVQIILDNDKYLIKHPILEELKNAYSHA</sequence>
<organism>
    <name type="scientific">Caldanaerobacter subterraneus subsp. tengcongensis (strain DSM 15242 / JCM 11007 / NBRC 100824 / MB4)</name>
    <name type="common">Thermoanaerobacter tengcongensis</name>
    <dbReference type="NCBI Taxonomy" id="273068"/>
    <lineage>
        <taxon>Bacteria</taxon>
        <taxon>Bacillati</taxon>
        <taxon>Bacillota</taxon>
        <taxon>Clostridia</taxon>
        <taxon>Thermoanaerobacterales</taxon>
        <taxon>Thermoanaerobacteraceae</taxon>
        <taxon>Caldanaerobacter</taxon>
    </lineage>
</organism>
<comment type="function">
    <text evidence="1">Acts as an anti-CsrA protein, binds CsrA and prevents it from repressing translation of its target genes, one of which is flagellin. Binds to flagellin and participates in the assembly of the flagellum.</text>
</comment>
<comment type="subunit">
    <text evidence="1">Interacts with translational regulator CsrA and flagellin(s).</text>
</comment>
<comment type="subcellular location">
    <subcellularLocation>
        <location evidence="1">Cytoplasm</location>
    </subcellularLocation>
</comment>
<comment type="similarity">
    <text evidence="1">Belongs to the FliW family.</text>
</comment>
<name>FLIW_CALS4</name>
<dbReference type="EMBL" id="AE008691">
    <property type="protein sequence ID" value="AAM23777.1"/>
    <property type="molecule type" value="Genomic_DNA"/>
</dbReference>
<dbReference type="RefSeq" id="WP_011024927.1">
    <property type="nucleotide sequence ID" value="NZ_JANUCV010000001.1"/>
</dbReference>
<dbReference type="SMR" id="Q8RCD5"/>
<dbReference type="STRING" id="273068.TTE0497"/>
<dbReference type="KEGG" id="tte:TTE0497"/>
<dbReference type="eggNOG" id="COG1699">
    <property type="taxonomic scope" value="Bacteria"/>
</dbReference>
<dbReference type="HOGENOM" id="CLU_112356_0_2_9"/>
<dbReference type="OrthoDB" id="9801235at2"/>
<dbReference type="Proteomes" id="UP000000555">
    <property type="component" value="Chromosome"/>
</dbReference>
<dbReference type="GO" id="GO:0005737">
    <property type="term" value="C:cytoplasm"/>
    <property type="evidence" value="ECO:0007669"/>
    <property type="project" value="UniProtKB-SubCell"/>
</dbReference>
<dbReference type="GO" id="GO:0044780">
    <property type="term" value="P:bacterial-type flagellum assembly"/>
    <property type="evidence" value="ECO:0007669"/>
    <property type="project" value="UniProtKB-UniRule"/>
</dbReference>
<dbReference type="GO" id="GO:0006417">
    <property type="term" value="P:regulation of translation"/>
    <property type="evidence" value="ECO:0007669"/>
    <property type="project" value="UniProtKB-KW"/>
</dbReference>
<dbReference type="Gene3D" id="2.30.290.10">
    <property type="entry name" value="BH3618-like"/>
    <property type="match status" value="1"/>
</dbReference>
<dbReference type="HAMAP" id="MF_01185">
    <property type="entry name" value="FliW"/>
    <property type="match status" value="1"/>
</dbReference>
<dbReference type="InterPro" id="IPR003775">
    <property type="entry name" value="Flagellar_assembly_factor_FliW"/>
</dbReference>
<dbReference type="InterPro" id="IPR024046">
    <property type="entry name" value="Flagellar_assmbl_FliW_dom_sf"/>
</dbReference>
<dbReference type="NCBIfam" id="NF009793">
    <property type="entry name" value="PRK13285.1-1"/>
    <property type="match status" value="1"/>
</dbReference>
<dbReference type="PANTHER" id="PTHR39190">
    <property type="entry name" value="FLAGELLAR ASSEMBLY FACTOR FLIW"/>
    <property type="match status" value="1"/>
</dbReference>
<dbReference type="PANTHER" id="PTHR39190:SF1">
    <property type="entry name" value="FLAGELLAR ASSEMBLY FACTOR FLIW"/>
    <property type="match status" value="1"/>
</dbReference>
<dbReference type="Pfam" id="PF02623">
    <property type="entry name" value="FliW"/>
    <property type="match status" value="1"/>
</dbReference>
<dbReference type="SUPFAM" id="SSF141457">
    <property type="entry name" value="BH3618-like"/>
    <property type="match status" value="1"/>
</dbReference>
<protein>
    <recommendedName>
        <fullName evidence="1">Flagellar assembly factor FliW</fullName>
    </recommendedName>
</protein>
<reference key="1">
    <citation type="journal article" date="2002" name="Genome Res.">
        <title>A complete sequence of the T. tengcongensis genome.</title>
        <authorList>
            <person name="Bao Q."/>
            <person name="Tian Y."/>
            <person name="Li W."/>
            <person name="Xu Z."/>
            <person name="Xuan Z."/>
            <person name="Hu S."/>
            <person name="Dong W."/>
            <person name="Yang J."/>
            <person name="Chen Y."/>
            <person name="Xue Y."/>
            <person name="Xu Y."/>
            <person name="Lai X."/>
            <person name="Huang L."/>
            <person name="Dong X."/>
            <person name="Ma Y."/>
            <person name="Ling L."/>
            <person name="Tan H."/>
            <person name="Chen R."/>
            <person name="Wang J."/>
            <person name="Yu J."/>
            <person name="Yang H."/>
        </authorList>
    </citation>
    <scope>NUCLEOTIDE SEQUENCE [LARGE SCALE GENOMIC DNA]</scope>
    <source>
        <strain>DSM 15242 / JCM 11007 / NBRC 100824 / MB4</strain>
    </source>
</reference>
<feature type="chain" id="PRO_0000273011" description="Flagellar assembly factor FliW">
    <location>
        <begin position="1"/>
        <end position="150"/>
    </location>
</feature>
<keyword id="KW-1005">Bacterial flagellum biogenesis</keyword>
<keyword id="KW-0143">Chaperone</keyword>
<keyword id="KW-0963">Cytoplasm</keyword>
<keyword id="KW-1185">Reference proteome</keyword>
<keyword id="KW-0810">Translation regulation</keyword>
<proteinExistence type="inferred from homology"/>